<accession>Q47SB4</accession>
<protein>
    <recommendedName>
        <fullName evidence="1">3-isopropylmalate dehydrogenase</fullName>
        <ecNumber evidence="1">1.1.1.85</ecNumber>
    </recommendedName>
    <alternativeName>
        <fullName evidence="1">3-IPM-DH</fullName>
    </alternativeName>
    <alternativeName>
        <fullName evidence="1">Beta-IPM dehydrogenase</fullName>
        <shortName evidence="1">IMDH</shortName>
    </alternativeName>
</protein>
<keyword id="KW-0028">Amino-acid biosynthesis</keyword>
<keyword id="KW-0100">Branched-chain amino acid biosynthesis</keyword>
<keyword id="KW-0963">Cytoplasm</keyword>
<keyword id="KW-0432">Leucine biosynthesis</keyword>
<keyword id="KW-0460">Magnesium</keyword>
<keyword id="KW-0464">Manganese</keyword>
<keyword id="KW-0479">Metal-binding</keyword>
<keyword id="KW-0520">NAD</keyword>
<keyword id="KW-0560">Oxidoreductase</keyword>
<proteinExistence type="inferred from homology"/>
<organism>
    <name type="scientific">Thermobifida fusca (strain YX)</name>
    <dbReference type="NCBI Taxonomy" id="269800"/>
    <lineage>
        <taxon>Bacteria</taxon>
        <taxon>Bacillati</taxon>
        <taxon>Actinomycetota</taxon>
        <taxon>Actinomycetes</taxon>
        <taxon>Streptosporangiales</taxon>
        <taxon>Nocardiopsidaceae</taxon>
        <taxon>Thermobifida</taxon>
    </lineage>
</organism>
<name>LEU3_THEFY</name>
<comment type="function">
    <text evidence="1">Catalyzes the oxidation of 3-carboxy-2-hydroxy-4-methylpentanoate (3-isopropylmalate) to 3-carboxy-4-methyl-2-oxopentanoate. The product decarboxylates to 4-methyl-2 oxopentanoate.</text>
</comment>
<comment type="catalytic activity">
    <reaction evidence="1">
        <text>(2R,3S)-3-isopropylmalate + NAD(+) = 4-methyl-2-oxopentanoate + CO2 + NADH</text>
        <dbReference type="Rhea" id="RHEA:32271"/>
        <dbReference type="ChEBI" id="CHEBI:16526"/>
        <dbReference type="ChEBI" id="CHEBI:17865"/>
        <dbReference type="ChEBI" id="CHEBI:35121"/>
        <dbReference type="ChEBI" id="CHEBI:57540"/>
        <dbReference type="ChEBI" id="CHEBI:57945"/>
        <dbReference type="EC" id="1.1.1.85"/>
    </reaction>
</comment>
<comment type="cofactor">
    <cofactor evidence="1">
        <name>Mg(2+)</name>
        <dbReference type="ChEBI" id="CHEBI:18420"/>
    </cofactor>
    <cofactor evidence="1">
        <name>Mn(2+)</name>
        <dbReference type="ChEBI" id="CHEBI:29035"/>
    </cofactor>
    <text evidence="1">Binds 1 Mg(2+) or Mn(2+) ion per subunit.</text>
</comment>
<comment type="pathway">
    <text evidence="1">Amino-acid biosynthesis; L-leucine biosynthesis; L-leucine from 3-methyl-2-oxobutanoate: step 3/4.</text>
</comment>
<comment type="subunit">
    <text evidence="1">Homodimer.</text>
</comment>
<comment type="subcellular location">
    <subcellularLocation>
        <location evidence="1">Cytoplasm</location>
    </subcellularLocation>
</comment>
<comment type="similarity">
    <text evidence="1">Belongs to the isocitrate and isopropylmalate dehydrogenases family. LeuB type 2 subfamily.</text>
</comment>
<feature type="chain" id="PRO_0000083807" description="3-isopropylmalate dehydrogenase">
    <location>
        <begin position="1"/>
        <end position="354"/>
    </location>
</feature>
<feature type="binding site" evidence="1">
    <location>
        <position position="96"/>
    </location>
    <ligand>
        <name>substrate</name>
    </ligand>
</feature>
<feature type="binding site" evidence="1">
    <location>
        <position position="106"/>
    </location>
    <ligand>
        <name>substrate</name>
    </ligand>
</feature>
<feature type="binding site" evidence="1">
    <location>
        <position position="132"/>
    </location>
    <ligand>
        <name>substrate</name>
    </ligand>
</feature>
<feature type="binding site" evidence="1">
    <location>
        <position position="223"/>
    </location>
    <ligand>
        <name>Mg(2+)</name>
        <dbReference type="ChEBI" id="CHEBI:18420"/>
    </ligand>
</feature>
<feature type="binding site" evidence="1">
    <location>
        <position position="223"/>
    </location>
    <ligand>
        <name>substrate</name>
    </ligand>
</feature>
<feature type="binding site" evidence="1">
    <location>
        <position position="247"/>
    </location>
    <ligand>
        <name>Mg(2+)</name>
        <dbReference type="ChEBI" id="CHEBI:18420"/>
    </ligand>
</feature>
<feature type="binding site" evidence="1">
    <location>
        <position position="251"/>
    </location>
    <ligand>
        <name>Mg(2+)</name>
        <dbReference type="ChEBI" id="CHEBI:18420"/>
    </ligand>
</feature>
<feature type="binding site" evidence="1">
    <location>
        <begin position="283"/>
        <end position="295"/>
    </location>
    <ligand>
        <name>NAD(+)</name>
        <dbReference type="ChEBI" id="CHEBI:57540"/>
    </ligand>
</feature>
<feature type="site" description="Important for catalysis" evidence="1">
    <location>
        <position position="139"/>
    </location>
</feature>
<feature type="site" description="Important for catalysis" evidence="1">
    <location>
        <position position="190"/>
    </location>
</feature>
<evidence type="ECO:0000255" key="1">
    <source>
        <dbReference type="HAMAP-Rule" id="MF_01035"/>
    </source>
</evidence>
<sequence length="354" mass="37836">MSARTVKLAVIPGDGIGPEVVAEGLKVLSAVAPRHGLTLDTTEYELGAQRWHATGEVLPDAVEEELRQHDAILLGAVGDPTVPSGVLERGLLLRLRFNFSHYVNLRPVRLYPGVTTPLAGVAPEDIDMLVVREGTEGPYAGMGGVLRKGTPHEIATQDSVNTRLGVERVVRYAFAKAAERPCHKLTLVHKDNVLTYAGELWQRVVREVGAEYPQVEVDYLHVDAATMFFVTQPRRFDVVVTDNLFGDIITDLGAAVAGGIGLAASGNINPEGDFPSMFEPVHGSAPDIAGQGKADPTATILSVSLMLEHLGYADAAAQIDQAVAEDLQERAKNGGVRSTTQIGDDIAQRVAEQG</sequence>
<dbReference type="EC" id="1.1.1.85" evidence="1"/>
<dbReference type="EMBL" id="CP000088">
    <property type="protein sequence ID" value="AAZ54653.1"/>
    <property type="molecule type" value="Genomic_DNA"/>
</dbReference>
<dbReference type="RefSeq" id="WP_011291062.1">
    <property type="nucleotide sequence ID" value="NC_007333.1"/>
</dbReference>
<dbReference type="SMR" id="Q47SB4"/>
<dbReference type="STRING" id="269800.Tfu_0615"/>
<dbReference type="KEGG" id="tfu:Tfu_0615"/>
<dbReference type="eggNOG" id="COG0473">
    <property type="taxonomic scope" value="Bacteria"/>
</dbReference>
<dbReference type="HOGENOM" id="CLU_031953_0_1_11"/>
<dbReference type="OrthoDB" id="5289857at2"/>
<dbReference type="UniPathway" id="UPA00048">
    <property type="reaction ID" value="UER00072"/>
</dbReference>
<dbReference type="GO" id="GO:0005737">
    <property type="term" value="C:cytoplasm"/>
    <property type="evidence" value="ECO:0007669"/>
    <property type="project" value="UniProtKB-SubCell"/>
</dbReference>
<dbReference type="GO" id="GO:0003862">
    <property type="term" value="F:3-isopropylmalate dehydrogenase activity"/>
    <property type="evidence" value="ECO:0007669"/>
    <property type="project" value="UniProtKB-UniRule"/>
</dbReference>
<dbReference type="GO" id="GO:0000287">
    <property type="term" value="F:magnesium ion binding"/>
    <property type="evidence" value="ECO:0007669"/>
    <property type="project" value="InterPro"/>
</dbReference>
<dbReference type="GO" id="GO:0051287">
    <property type="term" value="F:NAD binding"/>
    <property type="evidence" value="ECO:0007669"/>
    <property type="project" value="InterPro"/>
</dbReference>
<dbReference type="GO" id="GO:0009098">
    <property type="term" value="P:L-leucine biosynthetic process"/>
    <property type="evidence" value="ECO:0007669"/>
    <property type="project" value="UniProtKB-UniRule"/>
</dbReference>
<dbReference type="Gene3D" id="3.40.718.10">
    <property type="entry name" value="Isopropylmalate Dehydrogenase"/>
    <property type="match status" value="1"/>
</dbReference>
<dbReference type="HAMAP" id="MF_01035">
    <property type="entry name" value="LeuB_type2"/>
    <property type="match status" value="1"/>
</dbReference>
<dbReference type="InterPro" id="IPR050501">
    <property type="entry name" value="ICDH/IPMDH"/>
</dbReference>
<dbReference type="InterPro" id="IPR019818">
    <property type="entry name" value="IsoCit/isopropylmalate_DH_CS"/>
</dbReference>
<dbReference type="InterPro" id="IPR024084">
    <property type="entry name" value="IsoPropMal-DH-like_dom"/>
</dbReference>
<dbReference type="InterPro" id="IPR023698">
    <property type="entry name" value="LeuB_actb"/>
</dbReference>
<dbReference type="NCBIfam" id="NF002898">
    <property type="entry name" value="PRK03437.1"/>
    <property type="match status" value="1"/>
</dbReference>
<dbReference type="PANTHER" id="PTHR43275">
    <property type="entry name" value="D-MALATE DEHYDROGENASE [DECARBOXYLATING]"/>
    <property type="match status" value="1"/>
</dbReference>
<dbReference type="PANTHER" id="PTHR43275:SF1">
    <property type="entry name" value="D-MALATE DEHYDROGENASE [DECARBOXYLATING]"/>
    <property type="match status" value="1"/>
</dbReference>
<dbReference type="Pfam" id="PF00180">
    <property type="entry name" value="Iso_dh"/>
    <property type="match status" value="1"/>
</dbReference>
<dbReference type="SMART" id="SM01329">
    <property type="entry name" value="Iso_dh"/>
    <property type="match status" value="1"/>
</dbReference>
<dbReference type="SUPFAM" id="SSF53659">
    <property type="entry name" value="Isocitrate/Isopropylmalate dehydrogenase-like"/>
    <property type="match status" value="1"/>
</dbReference>
<dbReference type="PROSITE" id="PS00470">
    <property type="entry name" value="IDH_IMDH"/>
    <property type="match status" value="1"/>
</dbReference>
<gene>
    <name evidence="1" type="primary">leuB</name>
    <name type="ordered locus">Tfu_0615</name>
</gene>
<reference key="1">
    <citation type="journal article" date="2007" name="J. Bacteriol.">
        <title>Genome sequence and analysis of the soil cellulolytic actinomycete Thermobifida fusca YX.</title>
        <authorList>
            <person name="Lykidis A."/>
            <person name="Mavromatis K."/>
            <person name="Ivanova N."/>
            <person name="Anderson I."/>
            <person name="Land M."/>
            <person name="DiBartolo G."/>
            <person name="Martinez M."/>
            <person name="Lapidus A."/>
            <person name="Lucas S."/>
            <person name="Copeland A."/>
            <person name="Richardson P."/>
            <person name="Wilson D.B."/>
            <person name="Kyrpides N."/>
        </authorList>
    </citation>
    <scope>NUCLEOTIDE SEQUENCE [LARGE SCALE GENOMIC DNA]</scope>
    <source>
        <strain>YX</strain>
    </source>
</reference>